<protein>
    <recommendedName>
        <fullName evidence="7">Glycine dehydrogenase (decarboxylating), mitochondrial</fullName>
        <ecNumber evidence="3 4 5">1.4.4.2</ecNumber>
    </recommendedName>
    <alternativeName>
        <fullName>Glycine cleavage system P protein</fullName>
    </alternativeName>
    <alternativeName>
        <fullName evidence="6">Glycine decarboxylase</fullName>
    </alternativeName>
    <alternativeName>
        <fullName>Glycine dehydrogenase (aminomethyl-transferring)</fullName>
    </alternativeName>
</protein>
<organism>
    <name type="scientific">Gallus gallus</name>
    <name type="common">Chicken</name>
    <dbReference type="NCBI Taxonomy" id="9031"/>
    <lineage>
        <taxon>Eukaryota</taxon>
        <taxon>Metazoa</taxon>
        <taxon>Chordata</taxon>
        <taxon>Craniata</taxon>
        <taxon>Vertebrata</taxon>
        <taxon>Euteleostomi</taxon>
        <taxon>Archelosauria</taxon>
        <taxon>Archosauria</taxon>
        <taxon>Dinosauria</taxon>
        <taxon>Saurischia</taxon>
        <taxon>Theropoda</taxon>
        <taxon>Coelurosauria</taxon>
        <taxon>Aves</taxon>
        <taxon>Neognathae</taxon>
        <taxon>Galloanserae</taxon>
        <taxon>Galliformes</taxon>
        <taxon>Phasianidae</taxon>
        <taxon>Phasianinae</taxon>
        <taxon>Gallus</taxon>
    </lineage>
</organism>
<comment type="function">
    <text evidence="3 4 5">The glycine cleavage system catalyzes the degradation of glycine. The P protein (GLDC) binds the alpha-amino group of glycine through its pyridoxal phosphate cofactor; CO(2) is released and the remaining methylamine moiety is then transferred to the lipoamide cofactor of the H protein (GCSH).</text>
</comment>
<comment type="catalytic activity">
    <reaction evidence="3 4 5">
        <text>N(6)-[(R)-lipoyl]-L-lysyl-[glycine-cleavage complex H protein] + glycine + H(+) = N(6)-[(R)-S(8)-aminomethyldihydrolipoyl]-L-lysyl-[glycine-cleavage complex H protein] + CO2</text>
        <dbReference type="Rhea" id="RHEA:24304"/>
        <dbReference type="Rhea" id="RHEA-COMP:10494"/>
        <dbReference type="Rhea" id="RHEA-COMP:10495"/>
        <dbReference type="ChEBI" id="CHEBI:15378"/>
        <dbReference type="ChEBI" id="CHEBI:16526"/>
        <dbReference type="ChEBI" id="CHEBI:57305"/>
        <dbReference type="ChEBI" id="CHEBI:83099"/>
        <dbReference type="ChEBI" id="CHEBI:83143"/>
        <dbReference type="EC" id="1.4.4.2"/>
    </reaction>
</comment>
<comment type="cofactor">
    <cofactor evidence="4">
        <name>pyridoxal 5'-phosphate</name>
        <dbReference type="ChEBI" id="CHEBI:597326"/>
    </cofactor>
</comment>
<comment type="activity regulation">
    <text evidence="4 5">Stimulated by lipoic acid. Inhibited in presence of methylamine.</text>
</comment>
<comment type="biophysicochemical properties">
    <kinetics>
        <KM evidence="5">20 mM for glycine in presence of GCSH</KM>
        <KM evidence="5">27 mM for methylamine in presence of GCSH</KM>
        <KM evidence="4">40 mM for glycine</KM>
        <KM evidence="4">3.5 mM for lipoic acid</KM>
        <KM evidence="4">63 mM for methylamine</KM>
    </kinetics>
</comment>
<comment type="subunit">
    <text evidence="4 5">Homodimer. Interacts with GCSH. The glycine cleavage system is composed of four proteins: P (GLDC), T (GCST), L (DLD) and H (GCSH).</text>
</comment>
<comment type="subcellular location">
    <subcellularLocation>
        <location evidence="4">Mitochondrion</location>
    </subcellularLocation>
</comment>
<comment type="tissue specificity">
    <text evidence="4">Liver (at protein level).</text>
</comment>
<comment type="similarity">
    <text evidence="7">Belongs to the GcvP family.</text>
</comment>
<sequence>MQSCGRWWGRLAARGAPRHLRPAAGGPRRQQQRWGGGEAARCIEQLLPRHDDFCRRHIGPREREKREMLSAVGVQSVEELMDKTIPASIRLRRPLRMDDHVVENEILETLYNIASKNKIWRSYIGMGYYNCSVPQPIARNLLENAGWVTQYTPYQPEVSQGRLESLLNYQTMVCDITGMDVANASLLDEGTAAAEAMQLCHRQNKRRKFYIDARCHPQTIANYTGVITELKLPHEMDFSGKDVSGVLFQYPDTEGKVEDFSELIERAHQNGTLACCATDLLALCILKPPGEFGVDVVLGSSQRFGVPLCYGGPHAAFFAVKENLVRMMPGRMVGVTRDANGKEVYRLALQTREQHIRRDKATSNICTAQALLANMAAMYGVYHGSDGLKDIARRVHNATLILAEGLRRAGHKLHHDLFFDTLTVTCGCSVKEVLDRAALRKINVRIYSDGRLGVSLDETVNEKDLDDILWIFGCESSAELVAEGMGEETKGILSTPFKRTSKFLTHQVFNSYHSETNIVRYMKRLENKDISLVHSMIPLGSCTMKLNSSAELAPISWKEFANIHPFVPLDQAQGYQQLFKDLEKDLCEITGYDKISFQPNSGAQGEYAGLAAIKAYLNAKGERHRSVCLIPRSAHGTNPASAQMAGMKIQPIEVDKNGSIDISHLKAMVDKHKENLAAIMITYPSTNGVFEEEIGDVCDLIHKHGGQVYLDGANMNAQVGLCRPGDYGSDVSHLNLHKTFCIPHGGGGPGMGPIGVKKHLAPYLPTHPVIKIQTDKDACPLGTVSAAPWGSSAILPISWVYIKTMGAKGLKHASEIAILNANYMAKRLEKHYKILFRGVRGYVAHEFILDTRPFKKTANIEAVDLAKRLQDYGFHAPTMSWPVAGTLMIEPTESEDKGELDRFCDAMISIRQEIADIEEGRMDPQVNPLKMSPHTLNCVTSSKWDRPYSREVAAFPLPFVKPESKFWPTIARIDDIYGDQHLVCTCPPMEAYESPFSEQKRASS</sequence>
<evidence type="ECO:0000250" key="1">
    <source>
        <dbReference type="UniProtKB" id="P23378"/>
    </source>
</evidence>
<evidence type="ECO:0000255" key="2"/>
<evidence type="ECO:0000269" key="3">
    <source>
    </source>
</evidence>
<evidence type="ECO:0000269" key="4">
    <source>
    </source>
</evidence>
<evidence type="ECO:0000269" key="5">
    <source>
    </source>
</evidence>
<evidence type="ECO:0000303" key="6">
    <source>
    </source>
</evidence>
<evidence type="ECO:0000305" key="7"/>
<accession>P15505</accession>
<reference key="1">
    <citation type="journal article" date="1991" name="J. Biol. Chem.">
        <title>The glycine cleavage system. Molecular cloning of the chicken and human glycine decarboxylase cDNAs and some characteristics involved in the deduced protein structures.</title>
        <authorList>
            <person name="Kume A."/>
            <person name="Koyata H."/>
            <person name="Sakakibara T."/>
            <person name="Ishiguro Y."/>
            <person name="Kure S."/>
            <person name="Hiraga K."/>
        </authorList>
    </citation>
    <scope>NUCLEOTIDE SEQUENCE [GENOMIC DNA / MRNA]</scope>
    <scope>CATALYTIC ACTIVITY</scope>
    <source>
        <strain>White leghorn</strain>
    </source>
</reference>
<reference key="2">
    <citation type="journal article" date="1987" name="Biochem. Biophys. Res. Commun.">
        <title>Amino acid sequence of the phosphopyridoxyl peptide from P-protein of the chicken liver glycine cleavage system.</title>
        <authorList>
            <person name="Fujiwara K."/>
            <person name="Okamura-Ikeda K."/>
            <person name="Motokawa Y."/>
        </authorList>
    </citation>
    <scope>PROTEIN SEQUENCE OF 704-757</scope>
    <source>
        <tissue>Liver</tissue>
    </source>
</reference>
<reference key="3">
    <citation type="journal article" date="1980" name="J. Biol. Chem.">
        <title>The mitochondrial glycine cleavage system. Purification and properties of glycine decarboxylase from chicken liver mitochondria.</title>
        <authorList>
            <person name="Hiraga K."/>
            <person name="Kikuchi G."/>
        </authorList>
    </citation>
    <scope>SUBUNIT</scope>
    <scope>CATALYTIC ACTIVITY</scope>
    <scope>BIOPHYSICOCHEMICAL PROPERTIES</scope>
    <scope>COFACTOR</scope>
    <scope>ACTIVITY REGULATION</scope>
    <scope>SUBCELLULAR LOCATION</scope>
    <scope>TISSUE SPECIFICITY</scope>
    <scope>FUNCTION</scope>
</reference>
<reference key="4">
    <citation type="journal article" date="1980" name="J. Biol. Chem.">
        <title>The mitochondrial glycine cleavage system. Functional association of glycine decarboxylase and aminomethyl carrier protein.</title>
        <authorList>
            <person name="Hiraga K."/>
            <person name="Kikuchi G."/>
        </authorList>
    </citation>
    <scope>SUBUNIT</scope>
    <scope>INTERACTION WITH GCSH</scope>
    <scope>CATALYTIC ACTIVITY</scope>
    <scope>BIOPHYSICOCHEMICAL PROPERTIES</scope>
    <scope>ACTIVITY REGULATION</scope>
    <scope>FUNCTION</scope>
</reference>
<name>GCSP_CHICK</name>
<gene>
    <name evidence="1" type="primary">GLDC</name>
</gene>
<keyword id="KW-0903">Direct protein sequencing</keyword>
<keyword id="KW-0496">Mitochondrion</keyword>
<keyword id="KW-0560">Oxidoreductase</keyword>
<keyword id="KW-0663">Pyridoxal phosphate</keyword>
<keyword id="KW-1185">Reference proteome</keyword>
<keyword id="KW-0809">Transit peptide</keyword>
<feature type="transit peptide" description="Mitochondrion" evidence="2">
    <location>
        <begin position="1"/>
        <end status="unknown"/>
    </location>
</feature>
<feature type="chain" id="PRO_0000010742" description="Glycine dehydrogenase (decarboxylating), mitochondrial">
    <location>
        <begin status="unknown"/>
        <end position="1004"/>
    </location>
</feature>
<feature type="modified residue" description="N6-(pyridoxal phosphate)lysine" evidence="4">
    <location>
        <position position="738"/>
    </location>
</feature>
<proteinExistence type="evidence at protein level"/>
<dbReference type="EC" id="1.4.4.2" evidence="3 4 5"/>
<dbReference type="EMBL" id="M64402">
    <property type="protein sequence ID" value="AAA49029.1"/>
    <property type="molecule type" value="mRNA"/>
</dbReference>
<dbReference type="EMBL" id="D90266">
    <property type="protein sequence ID" value="BAA14313.1"/>
    <property type="molecule type" value="mRNA"/>
</dbReference>
<dbReference type="EMBL" id="D90240">
    <property type="protein sequence ID" value="BAA14287.1"/>
    <property type="molecule type" value="Genomic_DNA"/>
</dbReference>
<dbReference type="PIR" id="A39521">
    <property type="entry name" value="A39521"/>
</dbReference>
<dbReference type="RefSeq" id="NP_989653.1">
    <property type="nucleotide sequence ID" value="NM_204322.1"/>
</dbReference>
<dbReference type="SMR" id="P15505"/>
<dbReference type="FunCoup" id="P15505">
    <property type="interactions" value="348"/>
</dbReference>
<dbReference type="STRING" id="9031.ENSGALP00000037556"/>
<dbReference type="PaxDb" id="9031-ENSGALP00000037556"/>
<dbReference type="GeneID" id="374222"/>
<dbReference type="KEGG" id="gga:374222"/>
<dbReference type="CTD" id="2731"/>
<dbReference type="VEuPathDB" id="HostDB:geneid_374222"/>
<dbReference type="eggNOG" id="KOG2040">
    <property type="taxonomic scope" value="Eukaryota"/>
</dbReference>
<dbReference type="InParanoid" id="P15505"/>
<dbReference type="OrthoDB" id="6537869at2759"/>
<dbReference type="PhylomeDB" id="P15505"/>
<dbReference type="BioCyc" id="MetaCyc:MONOMER-12926"/>
<dbReference type="BRENDA" id="1.4.1.27">
    <property type="organism ID" value="1306"/>
</dbReference>
<dbReference type="BRENDA" id="1.4.4.2">
    <property type="organism ID" value="1306"/>
</dbReference>
<dbReference type="SABIO-RK" id="P15505"/>
<dbReference type="PRO" id="PR:P15505"/>
<dbReference type="Proteomes" id="UP000000539">
    <property type="component" value="Unassembled WGS sequence"/>
</dbReference>
<dbReference type="GO" id="GO:0005960">
    <property type="term" value="C:glycine cleavage complex"/>
    <property type="evidence" value="ECO:0000318"/>
    <property type="project" value="GO_Central"/>
</dbReference>
<dbReference type="GO" id="GO:0005739">
    <property type="term" value="C:mitochondrion"/>
    <property type="evidence" value="ECO:0000314"/>
    <property type="project" value="UniProtKB"/>
</dbReference>
<dbReference type="GO" id="GO:0016594">
    <property type="term" value="F:glycine binding"/>
    <property type="evidence" value="ECO:0000318"/>
    <property type="project" value="GO_Central"/>
</dbReference>
<dbReference type="GO" id="GO:0004375">
    <property type="term" value="F:glycine dehydrogenase (decarboxylating) activity"/>
    <property type="evidence" value="ECO:0000250"/>
    <property type="project" value="UniProtKB"/>
</dbReference>
<dbReference type="GO" id="GO:0047960">
    <property type="term" value="F:glycine dehydrogenase activity"/>
    <property type="evidence" value="ECO:0000314"/>
    <property type="project" value="UniProtKB"/>
</dbReference>
<dbReference type="GO" id="GO:0016829">
    <property type="term" value="F:lyase activity"/>
    <property type="evidence" value="ECO:0007669"/>
    <property type="project" value="InterPro"/>
</dbReference>
<dbReference type="GO" id="GO:0042803">
    <property type="term" value="F:protein homodimerization activity"/>
    <property type="evidence" value="ECO:0000314"/>
    <property type="project" value="UniProtKB"/>
</dbReference>
<dbReference type="GO" id="GO:0070280">
    <property type="term" value="F:pyridoxal binding"/>
    <property type="evidence" value="ECO:0000314"/>
    <property type="project" value="UniProtKB"/>
</dbReference>
<dbReference type="GO" id="GO:0030170">
    <property type="term" value="F:pyridoxal phosphate binding"/>
    <property type="evidence" value="ECO:0000318"/>
    <property type="project" value="GO_Central"/>
</dbReference>
<dbReference type="GO" id="GO:0006546">
    <property type="term" value="P:glycine catabolic process"/>
    <property type="evidence" value="ECO:0000314"/>
    <property type="project" value="UniProtKB"/>
</dbReference>
<dbReference type="GO" id="GO:0019464">
    <property type="term" value="P:glycine decarboxylation via glycine cleavage system"/>
    <property type="evidence" value="ECO:0000318"/>
    <property type="project" value="GO_Central"/>
</dbReference>
<dbReference type="GO" id="GO:1903442">
    <property type="term" value="P:response to lipoic acid"/>
    <property type="evidence" value="ECO:0000314"/>
    <property type="project" value="UniProtKB"/>
</dbReference>
<dbReference type="GO" id="GO:0036255">
    <property type="term" value="P:response to methylamine"/>
    <property type="evidence" value="ECO:0000314"/>
    <property type="project" value="UniProtKB"/>
</dbReference>
<dbReference type="CDD" id="cd00613">
    <property type="entry name" value="GDC-P"/>
    <property type="match status" value="2"/>
</dbReference>
<dbReference type="FunFam" id="3.90.1150.10:FF:000025">
    <property type="entry name" value="Glycine cleavage system P protein"/>
    <property type="match status" value="1"/>
</dbReference>
<dbReference type="FunFam" id="3.90.1150.10:FF:000153">
    <property type="entry name" value="Glycine dehydrogenase (decarboxylating)"/>
    <property type="match status" value="1"/>
</dbReference>
<dbReference type="FunFam" id="3.40.640.10:FF:000007">
    <property type="entry name" value="glycine dehydrogenase (Decarboxylating), mitochondrial"/>
    <property type="match status" value="1"/>
</dbReference>
<dbReference type="FunFam" id="3.40.640.10:FF:000199">
    <property type="entry name" value="Glycine dehydrogenase [decarboxylating], mitochondrial"/>
    <property type="match status" value="1"/>
</dbReference>
<dbReference type="FunFam" id="3.40.640.10:FF:000225">
    <property type="entry name" value="Glycine dehydrogenase [decarboxylating], mitochondrial"/>
    <property type="match status" value="1"/>
</dbReference>
<dbReference type="Gene3D" id="3.90.1150.10">
    <property type="entry name" value="Aspartate Aminotransferase, domain 1"/>
    <property type="match status" value="2"/>
</dbReference>
<dbReference type="Gene3D" id="3.40.640.10">
    <property type="entry name" value="Type I PLP-dependent aspartate aminotransferase-like (Major domain)"/>
    <property type="match status" value="2"/>
</dbReference>
<dbReference type="HAMAP" id="MF_00711">
    <property type="entry name" value="GcvP"/>
    <property type="match status" value="1"/>
</dbReference>
<dbReference type="InterPro" id="IPR001597">
    <property type="entry name" value="ArAA_b-elim_lyase/Thr_aldolase"/>
</dbReference>
<dbReference type="InterPro" id="IPR003437">
    <property type="entry name" value="GcvP"/>
</dbReference>
<dbReference type="InterPro" id="IPR049316">
    <property type="entry name" value="GDC-P_C"/>
</dbReference>
<dbReference type="InterPro" id="IPR049315">
    <property type="entry name" value="GDC-P_N"/>
</dbReference>
<dbReference type="InterPro" id="IPR020581">
    <property type="entry name" value="GDC_P"/>
</dbReference>
<dbReference type="InterPro" id="IPR015424">
    <property type="entry name" value="PyrdxlP-dep_Trfase"/>
</dbReference>
<dbReference type="InterPro" id="IPR015421">
    <property type="entry name" value="PyrdxlP-dep_Trfase_major"/>
</dbReference>
<dbReference type="InterPro" id="IPR015422">
    <property type="entry name" value="PyrdxlP-dep_Trfase_small"/>
</dbReference>
<dbReference type="NCBIfam" id="TIGR00461">
    <property type="entry name" value="gcvP"/>
    <property type="match status" value="1"/>
</dbReference>
<dbReference type="NCBIfam" id="NF003346">
    <property type="entry name" value="PRK04366.1"/>
    <property type="match status" value="1"/>
</dbReference>
<dbReference type="PANTHER" id="PTHR11773:SF1">
    <property type="entry name" value="GLYCINE DEHYDROGENASE (DECARBOXYLATING), MITOCHONDRIAL"/>
    <property type="match status" value="1"/>
</dbReference>
<dbReference type="PANTHER" id="PTHR11773">
    <property type="entry name" value="GLYCINE DEHYDROGENASE, DECARBOXYLATING"/>
    <property type="match status" value="1"/>
</dbReference>
<dbReference type="Pfam" id="PF01212">
    <property type="entry name" value="Beta_elim_lyase"/>
    <property type="match status" value="1"/>
</dbReference>
<dbReference type="Pfam" id="PF21478">
    <property type="entry name" value="GcvP2_C"/>
    <property type="match status" value="1"/>
</dbReference>
<dbReference type="Pfam" id="PF02347">
    <property type="entry name" value="GDC-P"/>
    <property type="match status" value="1"/>
</dbReference>
<dbReference type="SUPFAM" id="SSF53383">
    <property type="entry name" value="PLP-dependent transferases"/>
    <property type="match status" value="2"/>
</dbReference>